<name>G6PI_MYCGI</name>
<proteinExistence type="inferred from homology"/>
<sequence>MGTDITATSEWQALARHRDEIGETNLRQLFADDAARGLRFAVTVGGLYIDYSKHRVTAETLNLLVDVARAAGLETKRDAMFSGEHINTSEDRAVLHTALRLPRDAALTVDGQDVVADVHEVLDRMGDFTDRLRSGDWLGATGERITTVVNIGIGGSDLGPVMVDQALRHYADAGISARFVSNVDPADLVAKLAGLNPATTLFVIASKTFSTLETLTNATAARRWLIEALGEDAVSKHFVAVSTNAKLVAEFGIDTDNMFGFWDWVGGRYSVDSAIGLSVMAVIGRERFAEFLAGFHLIDEHFRTAPLEANAPVLLGLIGLWYNNFFGAETRAVLPYSNDLARFAAYLQQLTMESNGKSVQADGTPVSTATGEIFWGEPGTNGQHAFYQLLHQGTRLVPADFIGFSEPTDDLPTADGTGSMHDLLMSNFFAQTQVLAFGKTADEISAEGTSPDVVPHKVMPGNRPTTSILATKLTPSVVGQLIALYEHQVFVEGVIWGIDSFDQWGVELGKTQAKALLPVLTDAEPPAAQSDSSTDALVRRYRSERGRTA</sequence>
<gene>
    <name evidence="1" type="primary">pgi</name>
    <name type="ordered locus">Mflv_1857</name>
</gene>
<keyword id="KW-0963">Cytoplasm</keyword>
<keyword id="KW-0312">Gluconeogenesis</keyword>
<keyword id="KW-0324">Glycolysis</keyword>
<keyword id="KW-0413">Isomerase</keyword>
<accession>A4T6W8</accession>
<dbReference type="EC" id="5.3.1.9" evidence="1"/>
<dbReference type="EMBL" id="CP000656">
    <property type="protein sequence ID" value="ABP44337.1"/>
    <property type="molecule type" value="Genomic_DNA"/>
</dbReference>
<dbReference type="SMR" id="A4T6W8"/>
<dbReference type="STRING" id="350054.Mflv_1857"/>
<dbReference type="KEGG" id="mgi:Mflv_1857"/>
<dbReference type="eggNOG" id="COG0166">
    <property type="taxonomic scope" value="Bacteria"/>
</dbReference>
<dbReference type="HOGENOM" id="CLU_017947_3_1_11"/>
<dbReference type="OrthoDB" id="140919at2"/>
<dbReference type="UniPathway" id="UPA00109">
    <property type="reaction ID" value="UER00181"/>
</dbReference>
<dbReference type="UniPathway" id="UPA00138"/>
<dbReference type="GO" id="GO:0005829">
    <property type="term" value="C:cytosol"/>
    <property type="evidence" value="ECO:0007669"/>
    <property type="project" value="TreeGrafter"/>
</dbReference>
<dbReference type="GO" id="GO:0097367">
    <property type="term" value="F:carbohydrate derivative binding"/>
    <property type="evidence" value="ECO:0007669"/>
    <property type="project" value="InterPro"/>
</dbReference>
<dbReference type="GO" id="GO:0004347">
    <property type="term" value="F:glucose-6-phosphate isomerase activity"/>
    <property type="evidence" value="ECO:0007669"/>
    <property type="project" value="UniProtKB-UniRule"/>
</dbReference>
<dbReference type="GO" id="GO:0048029">
    <property type="term" value="F:monosaccharide binding"/>
    <property type="evidence" value="ECO:0007669"/>
    <property type="project" value="TreeGrafter"/>
</dbReference>
<dbReference type="GO" id="GO:0006094">
    <property type="term" value="P:gluconeogenesis"/>
    <property type="evidence" value="ECO:0007669"/>
    <property type="project" value="UniProtKB-UniRule"/>
</dbReference>
<dbReference type="GO" id="GO:0051156">
    <property type="term" value="P:glucose 6-phosphate metabolic process"/>
    <property type="evidence" value="ECO:0007669"/>
    <property type="project" value="TreeGrafter"/>
</dbReference>
<dbReference type="GO" id="GO:0006096">
    <property type="term" value="P:glycolytic process"/>
    <property type="evidence" value="ECO:0007669"/>
    <property type="project" value="UniProtKB-UniRule"/>
</dbReference>
<dbReference type="CDD" id="cd05015">
    <property type="entry name" value="SIS_PGI_1"/>
    <property type="match status" value="1"/>
</dbReference>
<dbReference type="CDD" id="cd05016">
    <property type="entry name" value="SIS_PGI_2"/>
    <property type="match status" value="1"/>
</dbReference>
<dbReference type="FunFam" id="3.40.50.10490:FF:000018">
    <property type="entry name" value="Glucose-6-phosphate isomerase"/>
    <property type="match status" value="1"/>
</dbReference>
<dbReference type="Gene3D" id="1.10.1390.10">
    <property type="match status" value="1"/>
</dbReference>
<dbReference type="Gene3D" id="3.40.50.10490">
    <property type="entry name" value="Glucose-6-phosphate isomerase like protein, domain 1"/>
    <property type="match status" value="2"/>
</dbReference>
<dbReference type="HAMAP" id="MF_00473">
    <property type="entry name" value="G6P_isomerase"/>
    <property type="match status" value="1"/>
</dbReference>
<dbReference type="InterPro" id="IPR001672">
    <property type="entry name" value="G6P_Isomerase"/>
</dbReference>
<dbReference type="InterPro" id="IPR023096">
    <property type="entry name" value="G6P_Isomerase_C"/>
</dbReference>
<dbReference type="InterPro" id="IPR018189">
    <property type="entry name" value="Phosphoglucose_isomerase_CS"/>
</dbReference>
<dbReference type="InterPro" id="IPR046348">
    <property type="entry name" value="SIS_dom_sf"/>
</dbReference>
<dbReference type="InterPro" id="IPR035476">
    <property type="entry name" value="SIS_PGI_1"/>
</dbReference>
<dbReference type="InterPro" id="IPR035482">
    <property type="entry name" value="SIS_PGI_2"/>
</dbReference>
<dbReference type="NCBIfam" id="NF001211">
    <property type="entry name" value="PRK00179.1"/>
    <property type="match status" value="1"/>
</dbReference>
<dbReference type="PANTHER" id="PTHR11469">
    <property type="entry name" value="GLUCOSE-6-PHOSPHATE ISOMERASE"/>
    <property type="match status" value="1"/>
</dbReference>
<dbReference type="PANTHER" id="PTHR11469:SF1">
    <property type="entry name" value="GLUCOSE-6-PHOSPHATE ISOMERASE"/>
    <property type="match status" value="1"/>
</dbReference>
<dbReference type="Pfam" id="PF00342">
    <property type="entry name" value="PGI"/>
    <property type="match status" value="1"/>
</dbReference>
<dbReference type="PRINTS" id="PR00662">
    <property type="entry name" value="G6PISOMERASE"/>
</dbReference>
<dbReference type="SUPFAM" id="SSF53697">
    <property type="entry name" value="SIS domain"/>
    <property type="match status" value="1"/>
</dbReference>
<dbReference type="PROSITE" id="PS00765">
    <property type="entry name" value="P_GLUCOSE_ISOMERASE_1"/>
    <property type="match status" value="1"/>
</dbReference>
<dbReference type="PROSITE" id="PS00174">
    <property type="entry name" value="P_GLUCOSE_ISOMERASE_2"/>
    <property type="match status" value="1"/>
</dbReference>
<dbReference type="PROSITE" id="PS51463">
    <property type="entry name" value="P_GLUCOSE_ISOMERASE_3"/>
    <property type="match status" value="1"/>
</dbReference>
<comment type="function">
    <text evidence="1">Catalyzes the reversible isomerization of glucose-6-phosphate to fructose-6-phosphate.</text>
</comment>
<comment type="catalytic activity">
    <reaction evidence="1">
        <text>alpha-D-glucose 6-phosphate = beta-D-fructose 6-phosphate</text>
        <dbReference type="Rhea" id="RHEA:11816"/>
        <dbReference type="ChEBI" id="CHEBI:57634"/>
        <dbReference type="ChEBI" id="CHEBI:58225"/>
        <dbReference type="EC" id="5.3.1.9"/>
    </reaction>
</comment>
<comment type="pathway">
    <text evidence="1">Carbohydrate biosynthesis; gluconeogenesis.</text>
</comment>
<comment type="pathway">
    <text evidence="1">Carbohydrate degradation; glycolysis; D-glyceraldehyde 3-phosphate and glycerone phosphate from D-glucose: step 2/4.</text>
</comment>
<comment type="subcellular location">
    <subcellularLocation>
        <location evidence="1">Cytoplasm</location>
    </subcellularLocation>
</comment>
<comment type="similarity">
    <text evidence="1">Belongs to the GPI family.</text>
</comment>
<protein>
    <recommendedName>
        <fullName evidence="1">Glucose-6-phosphate isomerase</fullName>
        <shortName evidence="1">GPI</shortName>
        <ecNumber evidence="1">5.3.1.9</ecNumber>
    </recommendedName>
    <alternativeName>
        <fullName evidence="1">Phosphoglucose isomerase</fullName>
        <shortName evidence="1">PGI</shortName>
    </alternativeName>
    <alternativeName>
        <fullName evidence="1">Phosphohexose isomerase</fullName>
        <shortName evidence="1">PHI</shortName>
    </alternativeName>
</protein>
<organism>
    <name type="scientific">Mycolicibacterium gilvum (strain PYR-GCK)</name>
    <name type="common">Mycobacterium gilvum (strain PYR-GCK)</name>
    <dbReference type="NCBI Taxonomy" id="350054"/>
    <lineage>
        <taxon>Bacteria</taxon>
        <taxon>Bacillati</taxon>
        <taxon>Actinomycetota</taxon>
        <taxon>Actinomycetes</taxon>
        <taxon>Mycobacteriales</taxon>
        <taxon>Mycobacteriaceae</taxon>
        <taxon>Mycolicibacterium</taxon>
    </lineage>
</organism>
<reference key="1">
    <citation type="submission" date="2007-04" db="EMBL/GenBank/DDBJ databases">
        <title>Complete sequence of chromosome of Mycobacterium gilvum PYR-GCK.</title>
        <authorList>
            <consortium name="US DOE Joint Genome Institute"/>
            <person name="Copeland A."/>
            <person name="Lucas S."/>
            <person name="Lapidus A."/>
            <person name="Barry K."/>
            <person name="Detter J.C."/>
            <person name="Glavina del Rio T."/>
            <person name="Hammon N."/>
            <person name="Israni S."/>
            <person name="Dalin E."/>
            <person name="Tice H."/>
            <person name="Pitluck S."/>
            <person name="Chain P."/>
            <person name="Malfatti S."/>
            <person name="Shin M."/>
            <person name="Vergez L."/>
            <person name="Schmutz J."/>
            <person name="Larimer F."/>
            <person name="Land M."/>
            <person name="Hauser L."/>
            <person name="Kyrpides N."/>
            <person name="Mikhailova N."/>
            <person name="Miller C."/>
            <person name="Richardson P."/>
        </authorList>
    </citation>
    <scope>NUCLEOTIDE SEQUENCE [LARGE SCALE GENOMIC DNA]</scope>
    <source>
        <strain>PYR-GCK</strain>
    </source>
</reference>
<feature type="chain" id="PRO_1000081243" description="Glucose-6-phosphate isomerase">
    <location>
        <begin position="1"/>
        <end position="549"/>
    </location>
</feature>
<feature type="region of interest" description="Disordered" evidence="2">
    <location>
        <begin position="523"/>
        <end position="549"/>
    </location>
</feature>
<feature type="compositionally biased region" description="Basic and acidic residues" evidence="2">
    <location>
        <begin position="537"/>
        <end position="549"/>
    </location>
</feature>
<feature type="active site" description="Proton donor" evidence="1">
    <location>
        <position position="353"/>
    </location>
</feature>
<feature type="active site" evidence="1">
    <location>
        <position position="384"/>
    </location>
</feature>
<feature type="active site" evidence="1">
    <location>
        <position position="510"/>
    </location>
</feature>
<evidence type="ECO:0000255" key="1">
    <source>
        <dbReference type="HAMAP-Rule" id="MF_00473"/>
    </source>
</evidence>
<evidence type="ECO:0000256" key="2">
    <source>
        <dbReference type="SAM" id="MobiDB-lite"/>
    </source>
</evidence>